<comment type="function">
    <text evidence="1 4">ATP-dependent serine protease that mediates the selective degradation of misfolded and unassembled polypeptides in the peroxisomal matrix. Necessary for type 2 peroxisome targeting signal (PTS2)-containing protein processing and facilitates peroxisome matrix protein import.</text>
</comment>
<comment type="catalytic activity">
    <reaction evidence="1">
        <text>Hydrolysis of proteins in presence of ATP.</text>
        <dbReference type="EC" id="3.4.21.53"/>
    </reaction>
</comment>
<comment type="subcellular location">
    <subcellularLocation>
        <location evidence="1">Peroxisome matrix</location>
    </subcellularLocation>
</comment>
<comment type="similarity">
    <text evidence="1">Belongs to the peptidase S16 family.</text>
</comment>
<accession>Q2V573</accession>
<feature type="chain" id="PRO_0000395797" description="Lon protease homolog 2, peroxisomal">
    <location>
        <begin position="1"/>
        <end position="935"/>
    </location>
</feature>
<feature type="domain" description="Lon N-terminal" evidence="3">
    <location>
        <begin position="12"/>
        <end position="296"/>
    </location>
</feature>
<feature type="domain" description="Lon proteolytic" evidence="2">
    <location>
        <begin position="692"/>
        <end position="922"/>
    </location>
</feature>
<feature type="short sequence motif" description="Microbody targeting signal" evidence="1">
    <location>
        <begin position="933"/>
        <end position="935"/>
    </location>
</feature>
<feature type="active site" evidence="1">
    <location>
        <position position="789"/>
    </location>
</feature>
<feature type="active site" evidence="1">
    <location>
        <position position="832"/>
    </location>
</feature>
<feature type="binding site" evidence="1">
    <location>
        <begin position="452"/>
        <end position="459"/>
    </location>
    <ligand>
        <name>ATP</name>
        <dbReference type="ChEBI" id="CHEBI:30616"/>
    </ligand>
</feature>
<dbReference type="EC" id="3.4.21.53" evidence="1"/>
<dbReference type="EMBL" id="DQ297145">
    <property type="protein sequence ID" value="ABB88892.1"/>
    <property type="molecule type" value="Genomic_DNA"/>
</dbReference>
<dbReference type="SMR" id="Q2V573"/>
<dbReference type="PhylomeDB" id="Q2V573"/>
<dbReference type="BRENDA" id="3.6.4.7">
    <property type="organism ID" value="2587"/>
</dbReference>
<dbReference type="GO" id="GO:0005782">
    <property type="term" value="C:peroxisomal matrix"/>
    <property type="evidence" value="ECO:0007669"/>
    <property type="project" value="UniProtKB-SubCell"/>
</dbReference>
<dbReference type="GO" id="GO:0005524">
    <property type="term" value="F:ATP binding"/>
    <property type="evidence" value="ECO:0007669"/>
    <property type="project" value="UniProtKB-UniRule"/>
</dbReference>
<dbReference type="GO" id="GO:0016887">
    <property type="term" value="F:ATP hydrolysis activity"/>
    <property type="evidence" value="ECO:0007669"/>
    <property type="project" value="UniProtKB-UniRule"/>
</dbReference>
<dbReference type="GO" id="GO:0004176">
    <property type="term" value="F:ATP-dependent peptidase activity"/>
    <property type="evidence" value="ECO:0007669"/>
    <property type="project" value="UniProtKB-UniRule"/>
</dbReference>
<dbReference type="GO" id="GO:0004252">
    <property type="term" value="F:serine-type endopeptidase activity"/>
    <property type="evidence" value="ECO:0007669"/>
    <property type="project" value="UniProtKB-UniRule"/>
</dbReference>
<dbReference type="GO" id="GO:0016558">
    <property type="term" value="P:protein import into peroxisome matrix"/>
    <property type="evidence" value="ECO:0007669"/>
    <property type="project" value="UniProtKB-UniRule"/>
</dbReference>
<dbReference type="GO" id="GO:0016485">
    <property type="term" value="P:protein processing"/>
    <property type="evidence" value="ECO:0007669"/>
    <property type="project" value="UniProtKB-UniRule"/>
</dbReference>
<dbReference type="GO" id="GO:0006515">
    <property type="term" value="P:protein quality control for misfolded or incompletely synthesized proteins"/>
    <property type="evidence" value="ECO:0007669"/>
    <property type="project" value="UniProtKB-UniRule"/>
</dbReference>
<dbReference type="CDD" id="cd19500">
    <property type="entry name" value="RecA-like_Lon"/>
    <property type="match status" value="1"/>
</dbReference>
<dbReference type="FunFam" id="3.40.50.300:FF:000021">
    <property type="entry name" value="Lon protease homolog"/>
    <property type="match status" value="1"/>
</dbReference>
<dbReference type="Gene3D" id="1.10.8.60">
    <property type="match status" value="1"/>
</dbReference>
<dbReference type="Gene3D" id="1.20.5.5270">
    <property type="match status" value="1"/>
</dbReference>
<dbReference type="Gene3D" id="3.30.230.10">
    <property type="match status" value="1"/>
</dbReference>
<dbReference type="Gene3D" id="3.40.50.300">
    <property type="entry name" value="P-loop containing nucleotide triphosphate hydrolases"/>
    <property type="match status" value="1"/>
</dbReference>
<dbReference type="HAMAP" id="MF_03121">
    <property type="entry name" value="lonp2_euk"/>
    <property type="match status" value="1"/>
</dbReference>
<dbReference type="InterPro" id="IPR003593">
    <property type="entry name" value="AAA+_ATPase"/>
</dbReference>
<dbReference type="InterPro" id="IPR003959">
    <property type="entry name" value="ATPase_AAA_core"/>
</dbReference>
<dbReference type="InterPro" id="IPR054594">
    <property type="entry name" value="Lon_lid"/>
</dbReference>
<dbReference type="InterPro" id="IPR008269">
    <property type="entry name" value="Lon_proteolytic"/>
</dbReference>
<dbReference type="InterPro" id="IPR027065">
    <property type="entry name" value="Lon_Prtase"/>
</dbReference>
<dbReference type="InterPro" id="IPR003111">
    <property type="entry name" value="Lon_prtase_N"/>
</dbReference>
<dbReference type="InterPro" id="IPR027501">
    <property type="entry name" value="Lonp2_euk"/>
</dbReference>
<dbReference type="InterPro" id="IPR027417">
    <property type="entry name" value="P-loop_NTPase"/>
</dbReference>
<dbReference type="InterPro" id="IPR008268">
    <property type="entry name" value="Peptidase_S16_AS"/>
</dbReference>
<dbReference type="InterPro" id="IPR020568">
    <property type="entry name" value="Ribosomal_Su5_D2-typ_SF"/>
</dbReference>
<dbReference type="InterPro" id="IPR014721">
    <property type="entry name" value="Ribsml_uS5_D2-typ_fold_subgr"/>
</dbReference>
<dbReference type="PANTHER" id="PTHR10046">
    <property type="entry name" value="ATP DEPENDENT LON PROTEASE FAMILY MEMBER"/>
    <property type="match status" value="1"/>
</dbReference>
<dbReference type="Pfam" id="PF00004">
    <property type="entry name" value="AAA"/>
    <property type="match status" value="1"/>
</dbReference>
<dbReference type="Pfam" id="PF05362">
    <property type="entry name" value="Lon_C"/>
    <property type="match status" value="1"/>
</dbReference>
<dbReference type="Pfam" id="PF22667">
    <property type="entry name" value="Lon_lid"/>
    <property type="match status" value="1"/>
</dbReference>
<dbReference type="PRINTS" id="PR00830">
    <property type="entry name" value="ENDOLAPTASE"/>
</dbReference>
<dbReference type="SMART" id="SM00382">
    <property type="entry name" value="AAA"/>
    <property type="match status" value="1"/>
</dbReference>
<dbReference type="SUPFAM" id="SSF52540">
    <property type="entry name" value="P-loop containing nucleoside triphosphate hydrolases"/>
    <property type="match status" value="1"/>
</dbReference>
<dbReference type="SUPFAM" id="SSF54211">
    <property type="entry name" value="Ribosomal protein S5 domain 2-like"/>
    <property type="match status" value="1"/>
</dbReference>
<dbReference type="PROSITE" id="PS51787">
    <property type="entry name" value="LON_N"/>
    <property type="match status" value="1"/>
</dbReference>
<dbReference type="PROSITE" id="PS51786">
    <property type="entry name" value="LON_PROTEOLYTIC"/>
    <property type="match status" value="1"/>
</dbReference>
<dbReference type="PROSITE" id="PS01046">
    <property type="entry name" value="LON_SER"/>
    <property type="match status" value="1"/>
</dbReference>
<gene>
    <name type="primary">PLN</name>
</gene>
<keyword id="KW-0067">ATP-binding</keyword>
<keyword id="KW-0378">Hydrolase</keyword>
<keyword id="KW-0547">Nucleotide-binding</keyword>
<keyword id="KW-0576">Peroxisome</keyword>
<keyword id="KW-0645">Protease</keyword>
<keyword id="KW-0720">Serine protease</keyword>
<proteinExistence type="inferred from homology"/>
<protein>
    <recommendedName>
        <fullName evidence="1">Lon protease homolog 2, peroxisomal</fullName>
        <ecNumber evidence="1">3.4.21.53</ecNumber>
    </recommendedName>
</protein>
<name>LONP2_PICAN</name>
<evidence type="ECO:0000255" key="1">
    <source>
        <dbReference type="HAMAP-Rule" id="MF_03121"/>
    </source>
</evidence>
<evidence type="ECO:0000255" key="2">
    <source>
        <dbReference type="PROSITE-ProRule" id="PRU01122"/>
    </source>
</evidence>
<evidence type="ECO:0000255" key="3">
    <source>
        <dbReference type="PROSITE-ProRule" id="PRU01123"/>
    </source>
</evidence>
<evidence type="ECO:0000269" key="4">
    <source>
    </source>
</evidence>
<sequence>MSSKSSAWQVELPVHRLERNLIFLPGITYRVVFDKQKALDLASRWSAKERSERVAAIASRFGLSSKHLVACVPGYPDSDTCTVCVVNGFYEMSETTVVSFKGVTRGYIVQSDEDTATVEIQEETSVPHPDTKDMIRLFDNIDQFLTYYKDEGTLDSEDKEERSRHILLRLTPLATLLNAQLSASDVSAGLKRLRQAYGRKSGDFAHYNDVLVALFPFPIELKISYLRSKGAERIEVFNKCVAFANKVFEEHLDTSYLAEIWSSLDHHSSKAQSNVSRSQFISNHLRNLRRLVEEMGLMRVTGRGSRTAEDNDENKSIQDFVDSLDKYLINEDGKRLIAKDFERLKQMQSSSSDYQVLRAYLEIIMDLPWQRLDSFVESVNVDLARAREQLDADHYGMESAKERILEYLAVLNLHNQKQPRHEPEFVYGTGDEPTTKERPASTLKAPILLLTGPPGVGKTSLARSIATTLGRKFQRISVGGLNDFADLKGHRRTYVGAIPGLIVQALRRSQSMNPVILLDEVDKIGSNSRKGDPEAALLEILDPEQNTNFHDHYIGFPIDLSQILFVCTSNDLWQLSDPLRDRMEVIELAGYNYMEKVEISKKYLIPRQLERAGLSSDAVAMDDETILKMATHYTSEPGIRNLERLIAAICRGKAVERQMGEATKTVTVHDLAKYIGSPSHLRATAAGETKFQKGYGVVNGLSYNSDGSGSLLRFEMIGLPGSQKMNCTGRLGEVLLESSQIANTLVGYLLHNNLVAGTQEFRDELLKRYENTSVHLHVPEGAISKDGPSAGITMTLCLMSLVLRKKVPETLAMTGEITLTGKVLPIGGVREKLLGAHLAGKVNKVLLPRQNRKDVIEDFIYNLRNRELAKELFAKFLDEEEQLLKEGRTHAGEPEKWVYQTLGLEIVYVDDFSDVLASVWEGEVLLTGGIREARI</sequence>
<organism>
    <name type="scientific">Pichia angusta</name>
    <name type="common">Yeast</name>
    <name type="synonym">Hansenula polymorpha</name>
    <dbReference type="NCBI Taxonomy" id="870730"/>
    <lineage>
        <taxon>Eukaryota</taxon>
        <taxon>Fungi</taxon>
        <taxon>Dikarya</taxon>
        <taxon>Ascomycota</taxon>
        <taxon>Saccharomycotina</taxon>
        <taxon>Pichiomycetes</taxon>
        <taxon>Pichiales</taxon>
        <taxon>Pichiaceae</taxon>
        <taxon>Ogataea</taxon>
    </lineage>
</organism>
<reference key="1">
    <citation type="journal article" date="2007" name="Autophagy">
        <title>A peroxisomal lon protease and peroxisome degradation by autophagy play key roles in vitality of Hansenula polymorpha cells.</title>
        <authorList>
            <person name="Aksam E.B."/>
            <person name="Koek A."/>
            <person name="Kiel J.A."/>
            <person name="Jourdan S."/>
            <person name="Veenhuis M."/>
            <person name="van der Klei I.J."/>
        </authorList>
    </citation>
    <scope>NUCLEOTIDE SEQUENCE [GENOMIC DNA]</scope>
    <scope>FUNCTION</scope>
    <scope>SUBCELLULAR LOCATION</scope>
    <source>
        <strain>ATCC 14754 / CBS 1976 / JCM 3620 / NBRC 0799 / NCYC 495 / NRRL Y-1798 / VKM Y-1397</strain>
    </source>
</reference>